<reference key="1">
    <citation type="journal article" date="2000" name="Nature">
        <title>Sequence and analysis of chromosome 5 of the plant Arabidopsis thaliana.</title>
        <authorList>
            <person name="Tabata S."/>
            <person name="Kaneko T."/>
            <person name="Nakamura Y."/>
            <person name="Kotani H."/>
            <person name="Kato T."/>
            <person name="Asamizu E."/>
            <person name="Miyajima N."/>
            <person name="Sasamoto S."/>
            <person name="Kimura T."/>
            <person name="Hosouchi T."/>
            <person name="Kawashima K."/>
            <person name="Kohara M."/>
            <person name="Matsumoto M."/>
            <person name="Matsuno A."/>
            <person name="Muraki A."/>
            <person name="Nakayama S."/>
            <person name="Nakazaki N."/>
            <person name="Naruo K."/>
            <person name="Okumura S."/>
            <person name="Shinpo S."/>
            <person name="Takeuchi C."/>
            <person name="Wada T."/>
            <person name="Watanabe A."/>
            <person name="Yamada M."/>
            <person name="Yasuda M."/>
            <person name="Sato S."/>
            <person name="de la Bastide M."/>
            <person name="Huang E."/>
            <person name="Spiegel L."/>
            <person name="Gnoj L."/>
            <person name="O'Shaughnessy A."/>
            <person name="Preston R."/>
            <person name="Habermann K."/>
            <person name="Murray J."/>
            <person name="Johnson D."/>
            <person name="Rohlfing T."/>
            <person name="Nelson J."/>
            <person name="Stoneking T."/>
            <person name="Pepin K."/>
            <person name="Spieth J."/>
            <person name="Sekhon M."/>
            <person name="Armstrong J."/>
            <person name="Becker M."/>
            <person name="Belter E."/>
            <person name="Cordum H."/>
            <person name="Cordes M."/>
            <person name="Courtney L."/>
            <person name="Courtney W."/>
            <person name="Dante M."/>
            <person name="Du H."/>
            <person name="Edwards J."/>
            <person name="Fryman J."/>
            <person name="Haakensen B."/>
            <person name="Lamar E."/>
            <person name="Latreille P."/>
            <person name="Leonard S."/>
            <person name="Meyer R."/>
            <person name="Mulvaney E."/>
            <person name="Ozersky P."/>
            <person name="Riley A."/>
            <person name="Strowmatt C."/>
            <person name="Wagner-McPherson C."/>
            <person name="Wollam A."/>
            <person name="Yoakum M."/>
            <person name="Bell M."/>
            <person name="Dedhia N."/>
            <person name="Parnell L."/>
            <person name="Shah R."/>
            <person name="Rodriguez M."/>
            <person name="Hoon See L."/>
            <person name="Vil D."/>
            <person name="Baker J."/>
            <person name="Kirchoff K."/>
            <person name="Toth K."/>
            <person name="King L."/>
            <person name="Bahret A."/>
            <person name="Miller B."/>
            <person name="Marra M.A."/>
            <person name="Martienssen R."/>
            <person name="McCombie W.R."/>
            <person name="Wilson R.K."/>
            <person name="Murphy G."/>
            <person name="Bancroft I."/>
            <person name="Volckaert G."/>
            <person name="Wambutt R."/>
            <person name="Duesterhoeft A."/>
            <person name="Stiekema W."/>
            <person name="Pohl T."/>
            <person name="Entian K.-D."/>
            <person name="Terryn N."/>
            <person name="Hartley N."/>
            <person name="Bent E."/>
            <person name="Johnson S."/>
            <person name="Langham S.-A."/>
            <person name="McCullagh B."/>
            <person name="Robben J."/>
            <person name="Grymonprez B."/>
            <person name="Zimmermann W."/>
            <person name="Ramsperger U."/>
            <person name="Wedler H."/>
            <person name="Balke K."/>
            <person name="Wedler E."/>
            <person name="Peters S."/>
            <person name="van Staveren M."/>
            <person name="Dirkse W."/>
            <person name="Mooijman P."/>
            <person name="Klein Lankhorst R."/>
            <person name="Weitzenegger T."/>
            <person name="Bothe G."/>
            <person name="Rose M."/>
            <person name="Hauf J."/>
            <person name="Berneiser S."/>
            <person name="Hempel S."/>
            <person name="Feldpausch M."/>
            <person name="Lamberth S."/>
            <person name="Villarroel R."/>
            <person name="Gielen J."/>
            <person name="Ardiles W."/>
            <person name="Bents O."/>
            <person name="Lemcke K."/>
            <person name="Kolesov G."/>
            <person name="Mayer K.F.X."/>
            <person name="Rudd S."/>
            <person name="Schoof H."/>
            <person name="Schueller C."/>
            <person name="Zaccaria P."/>
            <person name="Mewes H.-W."/>
            <person name="Bevan M."/>
            <person name="Fransz P.F."/>
        </authorList>
    </citation>
    <scope>NUCLEOTIDE SEQUENCE [LARGE SCALE GENOMIC DNA]</scope>
    <source>
        <strain>cv. Columbia</strain>
    </source>
</reference>
<reference key="2">
    <citation type="journal article" date="2017" name="Plant J.">
        <title>Araport11: a complete reannotation of the Arabidopsis thaliana reference genome.</title>
        <authorList>
            <person name="Cheng C.Y."/>
            <person name="Krishnakumar V."/>
            <person name="Chan A.P."/>
            <person name="Thibaud-Nissen F."/>
            <person name="Schobel S."/>
            <person name="Town C.D."/>
        </authorList>
    </citation>
    <scope>GENOME REANNOTATION</scope>
    <source>
        <strain>cv. Columbia</strain>
    </source>
</reference>
<reference key="3">
    <citation type="journal article" date="2002" name="Plant Physiol.">
        <title>Molecular characterization of a novel gene family encoding ACT domain repeat proteins in Arabidopsis.</title>
        <authorList>
            <person name="Hsieh M.-H."/>
            <person name="Goodman H.M."/>
        </authorList>
    </citation>
    <scope>FUNCTION</scope>
</reference>
<organism>
    <name type="scientific">Arabidopsis thaliana</name>
    <name type="common">Mouse-ear cress</name>
    <dbReference type="NCBI Taxonomy" id="3702"/>
    <lineage>
        <taxon>Eukaryota</taxon>
        <taxon>Viridiplantae</taxon>
        <taxon>Streptophyta</taxon>
        <taxon>Embryophyta</taxon>
        <taxon>Tracheophyta</taxon>
        <taxon>Spermatophyta</taxon>
        <taxon>Magnoliopsida</taxon>
        <taxon>eudicotyledons</taxon>
        <taxon>Gunneridae</taxon>
        <taxon>Pentapetalae</taxon>
        <taxon>rosids</taxon>
        <taxon>malvids</taxon>
        <taxon>Brassicales</taxon>
        <taxon>Brassicaceae</taxon>
        <taxon>Camelineae</taxon>
        <taxon>Arabidopsis</taxon>
    </lineage>
</organism>
<comment type="function">
    <text evidence="3">May bind amino acids.</text>
</comment>
<name>ACR2_ARATH</name>
<keyword id="KW-1185">Reference proteome</keyword>
<keyword id="KW-0677">Repeat</keyword>
<proteinExistence type="predicted"/>
<sequence>MQKVCWPYFDPDFDNLGERIYGPPCRVYIDNDSIQDCTVVKVNSENKQGLLLEVVQILTDMNLIITKSYISSDGGWFMDVFHVKDEHGNKLTDKSVINHIKHAIGTSRRESDFIKASEANNNSLEPQLADHGEHTAIEMTGTDRPGLFSEIFAAFADLHCNVMEAHAWSHNARLACIAYVSDDNTHTPIDDPSRLASIEDHLSTVIRATADPASNSTHVGHKENETDGFLAGQGKGCMNSNMERRLHQLMLSVRDFDEPFCEPSSLSLLSSKLEYCDHKERKTTIVSIGNCEERGYSIVTVKSKDRRRLMFDTICTLVDMQYVIFHAALRSDGADAFQEYFIRHIDGRALNTEGEKERVIKCLEAAIERRVCEGVKLELCAENRVGLLSDITRVLRENGLTVVRADVETQGQKSLNAFYVRDISGNKIDMEFVESVKKEMRPIHLEVKNEDTKIDTVGSDEPTASASATPQRQPQPHRFSLGDILRSQMERLSLNFVPTK</sequence>
<accession>F4JWR0</accession>
<protein>
    <recommendedName>
        <fullName evidence="4">ACT domain-containing protein ACR2</fullName>
    </recommendedName>
    <alternativeName>
        <fullName evidence="3">Protein ACT DOMAIN REPEATS 2</fullName>
    </alternativeName>
</protein>
<gene>
    <name evidence="3" type="primary">ACR2</name>
    <name evidence="6" type="ordered locus">At5g25320</name>
</gene>
<evidence type="ECO:0000255" key="1">
    <source>
        <dbReference type="PROSITE-ProRule" id="PRU01007"/>
    </source>
</evidence>
<evidence type="ECO:0000256" key="2">
    <source>
        <dbReference type="SAM" id="MobiDB-lite"/>
    </source>
</evidence>
<evidence type="ECO:0000303" key="3">
    <source>
    </source>
</evidence>
<evidence type="ECO:0000305" key="4"/>
<evidence type="ECO:0000305" key="5">
    <source>
    </source>
</evidence>
<evidence type="ECO:0000312" key="6">
    <source>
        <dbReference type="Araport" id="AT5G25320"/>
    </source>
</evidence>
<dbReference type="EMBL" id="AC006258">
    <property type="status" value="NOT_ANNOTATED_CDS"/>
    <property type="molecule type" value="Genomic_DNA"/>
</dbReference>
<dbReference type="EMBL" id="CP002688">
    <property type="protein sequence ID" value="AED93426.1"/>
    <property type="molecule type" value="Genomic_DNA"/>
</dbReference>
<dbReference type="RefSeq" id="NP_197914.1">
    <property type="nucleotide sequence ID" value="NM_122441.2"/>
</dbReference>
<dbReference type="FunCoup" id="F4JWR0">
    <property type="interactions" value="12"/>
</dbReference>
<dbReference type="PaxDb" id="3702-AT5G25320.1"/>
<dbReference type="EnsemblPlants" id="AT5G25320.1">
    <property type="protein sequence ID" value="AT5G25320.1"/>
    <property type="gene ID" value="AT5G25320"/>
</dbReference>
<dbReference type="GeneID" id="832604"/>
<dbReference type="Gramene" id="AT5G25320.1">
    <property type="protein sequence ID" value="AT5G25320.1"/>
    <property type="gene ID" value="AT5G25320"/>
</dbReference>
<dbReference type="KEGG" id="ath:AT5G25320"/>
<dbReference type="Araport" id="AT5G25320"/>
<dbReference type="TAIR" id="AT5G25320"/>
<dbReference type="eggNOG" id="ENOG502QVHH">
    <property type="taxonomic scope" value="Eukaryota"/>
</dbReference>
<dbReference type="HOGENOM" id="CLU_031332_2_0_1"/>
<dbReference type="InParanoid" id="F4JWR0"/>
<dbReference type="PhylomeDB" id="F4JWR0"/>
<dbReference type="PRO" id="PR:F4JWR0"/>
<dbReference type="Proteomes" id="UP000006548">
    <property type="component" value="Chromosome 5"/>
</dbReference>
<dbReference type="ExpressionAtlas" id="F4JWR0">
    <property type="expression patterns" value="baseline and differential"/>
</dbReference>
<dbReference type="CDD" id="cd04895">
    <property type="entry name" value="ACT_ACR_1"/>
    <property type="match status" value="1"/>
</dbReference>
<dbReference type="CDD" id="cd04925">
    <property type="entry name" value="ACT_ACR_2"/>
    <property type="match status" value="1"/>
</dbReference>
<dbReference type="CDD" id="cd04897">
    <property type="entry name" value="ACT_ACR_3"/>
    <property type="match status" value="1"/>
</dbReference>
<dbReference type="CDD" id="cd04926">
    <property type="entry name" value="ACT_ACR_4"/>
    <property type="match status" value="1"/>
</dbReference>
<dbReference type="Gene3D" id="3.30.70.260">
    <property type="match status" value="2"/>
</dbReference>
<dbReference type="InterPro" id="IPR040217">
    <property type="entry name" value="ACR1-12"/>
</dbReference>
<dbReference type="InterPro" id="IPR056816">
    <property type="entry name" value="ACR2/9/10_N"/>
</dbReference>
<dbReference type="InterPro" id="IPR045865">
    <property type="entry name" value="ACT-like_dom_sf"/>
</dbReference>
<dbReference type="InterPro" id="IPR002912">
    <property type="entry name" value="ACT_dom"/>
</dbReference>
<dbReference type="PANTHER" id="PTHR31096:SF50">
    <property type="entry name" value="ACT DOMAIN-CONTAINING PROTEIN ACR2"/>
    <property type="match status" value="1"/>
</dbReference>
<dbReference type="PANTHER" id="PTHR31096">
    <property type="entry name" value="ACT DOMAIN-CONTAINING PROTEIN ACR4-RELATED"/>
    <property type="match status" value="1"/>
</dbReference>
<dbReference type="Pfam" id="PF24914">
    <property type="entry name" value="ACR10_N"/>
    <property type="match status" value="1"/>
</dbReference>
<dbReference type="Pfam" id="PF01842">
    <property type="entry name" value="ACT"/>
    <property type="match status" value="1"/>
</dbReference>
<dbReference type="Pfam" id="PF13740">
    <property type="entry name" value="ACT_6"/>
    <property type="match status" value="1"/>
</dbReference>
<dbReference type="SUPFAM" id="SSF55021">
    <property type="entry name" value="ACT-like"/>
    <property type="match status" value="3"/>
</dbReference>
<dbReference type="PROSITE" id="PS51671">
    <property type="entry name" value="ACT"/>
    <property type="match status" value="3"/>
</dbReference>
<feature type="chain" id="PRO_0000431456" description="ACT domain-containing protein ACR2">
    <location>
        <begin position="1"/>
        <end position="500"/>
    </location>
</feature>
<feature type="domain" description="ACT 1" evidence="1">
    <location>
        <begin position="39"/>
        <end position="121"/>
    </location>
</feature>
<feature type="domain" description="ACT 2" evidence="1">
    <location>
        <begin position="136"/>
        <end position="213"/>
    </location>
</feature>
<feature type="domain" description="ACT 3" evidence="5">
    <location>
        <begin position="298"/>
        <end position="373"/>
    </location>
</feature>
<feature type="domain" description="ACT 4" evidence="1">
    <location>
        <begin position="376"/>
        <end position="459"/>
    </location>
</feature>
<feature type="region of interest" description="Disordered" evidence="2">
    <location>
        <begin position="450"/>
        <end position="478"/>
    </location>
</feature>
<feature type="compositionally biased region" description="Polar residues" evidence="2">
    <location>
        <begin position="462"/>
        <end position="474"/>
    </location>
</feature>